<proteinExistence type="inferred from homology"/>
<accession>B7LEP0</accession>
<feature type="chain" id="PRO_1000198084" description="Inosine/xanthosine triphosphatase">
    <location>
        <begin position="1"/>
        <end position="170"/>
    </location>
</feature>
<feature type="binding site" evidence="1">
    <location>
        <begin position="8"/>
        <end position="13"/>
    </location>
    <ligand>
        <name>substrate</name>
    </ligand>
</feature>
<feature type="binding site" evidence="1">
    <location>
        <position position="38"/>
    </location>
    <ligand>
        <name>Mg(2+)</name>
        <dbReference type="ChEBI" id="CHEBI:18420"/>
    </ligand>
</feature>
<feature type="binding site" evidence="1">
    <location>
        <begin position="68"/>
        <end position="69"/>
    </location>
    <ligand>
        <name>substrate</name>
    </ligand>
</feature>
<feature type="binding site" evidence="1">
    <location>
        <position position="68"/>
    </location>
    <ligand>
        <name>Mg(2+)</name>
        <dbReference type="ChEBI" id="CHEBI:18420"/>
    </ligand>
</feature>
<dbReference type="EC" id="3.6.1.73" evidence="1"/>
<dbReference type="EMBL" id="CU928145">
    <property type="protein sequence ID" value="CAV02204.1"/>
    <property type="molecule type" value="Genomic_DNA"/>
</dbReference>
<dbReference type="RefSeq" id="WP_001338221.1">
    <property type="nucleotide sequence ID" value="NC_011748.1"/>
</dbReference>
<dbReference type="SMR" id="B7LEP0"/>
<dbReference type="GeneID" id="75169890"/>
<dbReference type="KEGG" id="eck:EC55989_5056"/>
<dbReference type="HOGENOM" id="CLU_087417_1_0_6"/>
<dbReference type="Proteomes" id="UP000000746">
    <property type="component" value="Chromosome"/>
</dbReference>
<dbReference type="GO" id="GO:0103023">
    <property type="term" value="F:ITPase activity"/>
    <property type="evidence" value="ECO:0007669"/>
    <property type="project" value="UniProtKB-EC"/>
</dbReference>
<dbReference type="GO" id="GO:0046872">
    <property type="term" value="F:metal ion binding"/>
    <property type="evidence" value="ECO:0007669"/>
    <property type="project" value="UniProtKB-KW"/>
</dbReference>
<dbReference type="GO" id="GO:0000166">
    <property type="term" value="F:nucleotide binding"/>
    <property type="evidence" value="ECO:0007669"/>
    <property type="project" value="UniProtKB-KW"/>
</dbReference>
<dbReference type="GO" id="GO:0017111">
    <property type="term" value="F:ribonucleoside triphosphate phosphatase activity"/>
    <property type="evidence" value="ECO:0000250"/>
    <property type="project" value="UniProtKB"/>
</dbReference>
<dbReference type="GO" id="GO:0009117">
    <property type="term" value="P:nucleotide metabolic process"/>
    <property type="evidence" value="ECO:0007669"/>
    <property type="project" value="UniProtKB-KW"/>
</dbReference>
<dbReference type="GO" id="GO:0006772">
    <property type="term" value="P:thiamine metabolic process"/>
    <property type="evidence" value="ECO:0007669"/>
    <property type="project" value="TreeGrafter"/>
</dbReference>
<dbReference type="FunFam" id="3.90.950.10:FF:000002">
    <property type="entry name" value="Inosine/xanthosine triphosphatase"/>
    <property type="match status" value="1"/>
</dbReference>
<dbReference type="Gene3D" id="3.90.950.10">
    <property type="match status" value="1"/>
</dbReference>
<dbReference type="HAMAP" id="MF_00648">
    <property type="entry name" value="Non_canon_purine_NTPase_YjjX"/>
    <property type="match status" value="1"/>
</dbReference>
<dbReference type="InterPro" id="IPR029001">
    <property type="entry name" value="ITPase-like_fam"/>
</dbReference>
<dbReference type="InterPro" id="IPR002786">
    <property type="entry name" value="Non_canon_purine_NTPase"/>
</dbReference>
<dbReference type="InterPro" id="IPR026533">
    <property type="entry name" value="NTPase/PRRC1"/>
</dbReference>
<dbReference type="InterPro" id="IPR050299">
    <property type="entry name" value="YjjX_NTPase"/>
</dbReference>
<dbReference type="NCBIfam" id="TIGR00258">
    <property type="entry name" value="inosine/xanthosine triphosphatase"/>
    <property type="match status" value="1"/>
</dbReference>
<dbReference type="NCBIfam" id="NF003459">
    <property type="entry name" value="PRK05074.1"/>
    <property type="match status" value="1"/>
</dbReference>
<dbReference type="PANTHER" id="PTHR34699">
    <property type="match status" value="1"/>
</dbReference>
<dbReference type="PANTHER" id="PTHR34699:SF2">
    <property type="entry name" value="NON-CANONICAL PURINE NTP PHOSPHATASE_PRRC1 DOMAIN-CONTAINING PROTEIN"/>
    <property type="match status" value="1"/>
</dbReference>
<dbReference type="Pfam" id="PF01931">
    <property type="entry name" value="NTPase_I-T"/>
    <property type="match status" value="1"/>
</dbReference>
<dbReference type="SUPFAM" id="SSF52972">
    <property type="entry name" value="ITPase-like"/>
    <property type="match status" value="1"/>
</dbReference>
<protein>
    <recommendedName>
        <fullName evidence="1">Inosine/xanthosine triphosphatase</fullName>
        <shortName evidence="1">ITPase/XTPase</shortName>
        <ecNumber evidence="1">3.6.1.73</ecNumber>
    </recommendedName>
    <alternativeName>
        <fullName evidence="1">Non-canonical purine NTP phosphatase</fullName>
    </alternativeName>
    <alternativeName>
        <fullName evidence="1">Non-standard purine NTP phosphatase</fullName>
    </alternativeName>
    <alternativeName>
        <fullName evidence="1">Nucleoside-triphosphate phosphatase</fullName>
        <shortName evidence="1">NTPase</shortName>
    </alternativeName>
</protein>
<reference key="1">
    <citation type="journal article" date="2009" name="PLoS Genet.">
        <title>Organised genome dynamics in the Escherichia coli species results in highly diverse adaptive paths.</title>
        <authorList>
            <person name="Touchon M."/>
            <person name="Hoede C."/>
            <person name="Tenaillon O."/>
            <person name="Barbe V."/>
            <person name="Baeriswyl S."/>
            <person name="Bidet P."/>
            <person name="Bingen E."/>
            <person name="Bonacorsi S."/>
            <person name="Bouchier C."/>
            <person name="Bouvet O."/>
            <person name="Calteau A."/>
            <person name="Chiapello H."/>
            <person name="Clermont O."/>
            <person name="Cruveiller S."/>
            <person name="Danchin A."/>
            <person name="Diard M."/>
            <person name="Dossat C."/>
            <person name="Karoui M.E."/>
            <person name="Frapy E."/>
            <person name="Garry L."/>
            <person name="Ghigo J.M."/>
            <person name="Gilles A.M."/>
            <person name="Johnson J."/>
            <person name="Le Bouguenec C."/>
            <person name="Lescat M."/>
            <person name="Mangenot S."/>
            <person name="Martinez-Jehanne V."/>
            <person name="Matic I."/>
            <person name="Nassif X."/>
            <person name="Oztas S."/>
            <person name="Petit M.A."/>
            <person name="Pichon C."/>
            <person name="Rouy Z."/>
            <person name="Ruf C.S."/>
            <person name="Schneider D."/>
            <person name="Tourret J."/>
            <person name="Vacherie B."/>
            <person name="Vallenet D."/>
            <person name="Medigue C."/>
            <person name="Rocha E.P.C."/>
            <person name="Denamur E."/>
        </authorList>
    </citation>
    <scope>NUCLEOTIDE SEQUENCE [LARGE SCALE GENOMIC DNA]</scope>
    <source>
        <strain>55989 / EAEC</strain>
    </source>
</reference>
<sequence>MHQVVCATTNPAKIQAILQAFHEIFGEGSCHIASVAVESGVPEQPFGSEETRAGARNRVANARRLLPEADFWVAIEAGIDGDSTFSWVVIENASQRGEARSATLPLPAVILEKVREGEALGPVMSRYTGIDEIGRKEGAIGVFTAGKLTRASVYHQAVILALSPFHNAVY</sequence>
<organism>
    <name type="scientific">Escherichia coli (strain 55989 / EAEC)</name>
    <dbReference type="NCBI Taxonomy" id="585055"/>
    <lineage>
        <taxon>Bacteria</taxon>
        <taxon>Pseudomonadati</taxon>
        <taxon>Pseudomonadota</taxon>
        <taxon>Gammaproteobacteria</taxon>
        <taxon>Enterobacterales</taxon>
        <taxon>Enterobacteriaceae</taxon>
        <taxon>Escherichia</taxon>
    </lineage>
</organism>
<comment type="function">
    <text evidence="1">Phosphatase that hydrolyzes non-canonical purine nucleotides such as XTP and ITP to their respective diphosphate derivatives. Probably excludes non-canonical purines from DNA/RNA precursor pool, thus preventing their incorporation into DNA/RNA and avoiding chromosomal lesions.</text>
</comment>
<comment type="catalytic activity">
    <reaction evidence="1">
        <text>XTP + H2O = XDP + phosphate + H(+)</text>
        <dbReference type="Rhea" id="RHEA:28406"/>
        <dbReference type="ChEBI" id="CHEBI:15377"/>
        <dbReference type="ChEBI" id="CHEBI:15378"/>
        <dbReference type="ChEBI" id="CHEBI:43474"/>
        <dbReference type="ChEBI" id="CHEBI:59884"/>
        <dbReference type="ChEBI" id="CHEBI:61314"/>
        <dbReference type="EC" id="3.6.1.73"/>
    </reaction>
</comment>
<comment type="catalytic activity">
    <reaction evidence="1">
        <text>ITP + H2O = IDP + phosphate + H(+)</text>
        <dbReference type="Rhea" id="RHEA:28330"/>
        <dbReference type="ChEBI" id="CHEBI:15377"/>
        <dbReference type="ChEBI" id="CHEBI:15378"/>
        <dbReference type="ChEBI" id="CHEBI:43474"/>
        <dbReference type="ChEBI" id="CHEBI:58280"/>
        <dbReference type="ChEBI" id="CHEBI:61402"/>
        <dbReference type="EC" id="3.6.1.73"/>
    </reaction>
</comment>
<comment type="cofactor">
    <cofactor evidence="1">
        <name>Mg(2+)</name>
        <dbReference type="ChEBI" id="CHEBI:18420"/>
    </cofactor>
    <cofactor evidence="1">
        <name>Mn(2+)</name>
        <dbReference type="ChEBI" id="CHEBI:29035"/>
    </cofactor>
    <text evidence="1">Binds 1 divalent metal cation per subunit; can use either Mg(2+) or Mn(2+).</text>
</comment>
<comment type="subunit">
    <text evidence="1">Homodimer.</text>
</comment>
<comment type="similarity">
    <text evidence="1">Belongs to the YjjX NTPase family.</text>
</comment>
<evidence type="ECO:0000255" key="1">
    <source>
        <dbReference type="HAMAP-Rule" id="MF_00648"/>
    </source>
</evidence>
<keyword id="KW-0378">Hydrolase</keyword>
<keyword id="KW-0460">Magnesium</keyword>
<keyword id="KW-0464">Manganese</keyword>
<keyword id="KW-0479">Metal-binding</keyword>
<keyword id="KW-0546">Nucleotide metabolism</keyword>
<keyword id="KW-0547">Nucleotide-binding</keyword>
<keyword id="KW-1185">Reference proteome</keyword>
<name>NCPP_ECO55</name>
<gene>
    <name type="primary">yjjX</name>
    <name type="ordered locus">EC55989_5056</name>
</gene>